<organism>
    <name type="scientific">Tomato bushy stunt virus (strain A23)</name>
    <name type="common">TBSV</name>
    <dbReference type="NCBI Taxonomy" id="70156"/>
    <lineage>
        <taxon>Viruses</taxon>
        <taxon>Riboviria</taxon>
        <taxon>Orthornavirae</taxon>
        <taxon>Kitrinoviricota</taxon>
        <taxon>Tolucaviricetes</taxon>
        <taxon>Tolivirales</taxon>
        <taxon>Tombusviridae</taxon>
        <taxon>Procedovirinae</taxon>
        <taxon>Tombusvirus</taxon>
        <taxon>Tombusvirus lycopersici</taxon>
    </lineage>
</organism>
<feature type="chain" id="PRO_0000222879" description="RNA silencing suppressor p19">
    <location>
        <begin position="1"/>
        <end position="172"/>
    </location>
</feature>
<feature type="region of interest" description="Disordered" evidence="2">
    <location>
        <begin position="1"/>
        <end position="38"/>
    </location>
</feature>
<feature type="compositionally biased region" description="Basic and acidic residues" evidence="2">
    <location>
        <begin position="1"/>
        <end position="15"/>
    </location>
</feature>
<keyword id="KW-0945">Host-virus interaction</keyword>
<keyword id="KW-1090">Inhibition of host innate immune response by virus</keyword>
<keyword id="KW-0694">RNA-binding</keyword>
<keyword id="KW-0941">Suppressor of RNA silencing</keyword>
<keyword id="KW-0899">Viral immunoevasion</keyword>
<evidence type="ECO:0000250" key="1"/>
<evidence type="ECO:0000256" key="2">
    <source>
        <dbReference type="SAM" id="MobiDB-lite"/>
    </source>
</evidence>
<evidence type="ECO:0000305" key="3"/>
<reference key="1">
    <citation type="journal article" date="1996" name="Phytopathology">
        <title>Different tomato bushy stunt virus strains cause disease outbreaks on solanaceous crops in Spain.</title>
        <authorList>
            <person name="Luis-Areteaga M."/>
            <person name="Rodriguez-Cerezo E."/>
            <person name="Fraile A."/>
            <person name="Saez E."/>
            <person name="Garcia-Arenal F."/>
        </authorList>
        <dbReference type="AGRICOLA" id="IND20581771"/>
    </citation>
    <scope>NUCLEOTIDE SEQUENCE [GENOMIC RNA]</scope>
</reference>
<organismHost>
    <name type="scientific">Capsicum annuum</name>
    <name type="common">Capsicum pepper</name>
    <dbReference type="NCBI Taxonomy" id="4072"/>
</organismHost>
<organismHost>
    <name type="scientific">Malus</name>
    <dbReference type="NCBI Taxonomy" id="3749"/>
</organismHost>
<organismHost>
    <name type="scientific">Pyrus</name>
    <name type="common">pears</name>
    <dbReference type="NCBI Taxonomy" id="3766"/>
</organismHost>
<organismHost>
    <name type="scientific">Solanum lycopersicum</name>
    <name type="common">Tomato</name>
    <name type="synonym">Lycopersicon esculentum</name>
    <dbReference type="NCBI Taxonomy" id="4081"/>
</organismHost>
<organismHost>
    <name type="scientific">Solanum melongena</name>
    <name type="common">eggplant</name>
    <dbReference type="NCBI Taxonomy" id="4111"/>
</organismHost>
<organismHost>
    <name type="scientific">Tolmiea menziesii</name>
    <dbReference type="NCBI Taxonomy" id="29777"/>
</organismHost>
<organismHost>
    <name type="scientific">Tulipa</name>
    <dbReference type="NCBI Taxonomy" id="13305"/>
</organismHost>
<dbReference type="EMBL" id="Z68896">
    <property type="protein sequence ID" value="CAA93126.1"/>
    <property type="molecule type" value="Genomic_RNA"/>
</dbReference>
<dbReference type="SMR" id="P50625"/>
<dbReference type="GO" id="GO:0044423">
    <property type="term" value="C:virion component"/>
    <property type="evidence" value="ECO:0007669"/>
    <property type="project" value="InterPro"/>
</dbReference>
<dbReference type="GO" id="GO:0003723">
    <property type="term" value="F:RNA binding"/>
    <property type="evidence" value="ECO:0007669"/>
    <property type="project" value="UniProtKB-KW"/>
</dbReference>
<dbReference type="GO" id="GO:0052170">
    <property type="term" value="P:symbiont-mediated suppression of host innate immune response"/>
    <property type="evidence" value="ECO:0007669"/>
    <property type="project" value="UniProtKB-KW"/>
</dbReference>
<dbReference type="Gene3D" id="3.30.390.180">
    <property type="entry name" value="RNA silencing suppressor P19"/>
    <property type="match status" value="1"/>
</dbReference>
<dbReference type="InterPro" id="IPR004905">
    <property type="entry name" value="Tombusvirus_p19"/>
</dbReference>
<dbReference type="InterPro" id="IPR036131">
    <property type="entry name" value="VP19_sf"/>
</dbReference>
<dbReference type="Pfam" id="PF03220">
    <property type="entry name" value="Tombus_P19"/>
    <property type="match status" value="1"/>
</dbReference>
<dbReference type="SUPFAM" id="SSF103145">
    <property type="entry name" value="Tombusvirus P19 core protein, VP19"/>
    <property type="match status" value="1"/>
</dbReference>
<name>P19_TBSVA</name>
<protein>
    <recommendedName>
        <fullName>RNA silencing suppressor p19</fullName>
    </recommendedName>
    <alternativeName>
        <fullName>19 kDa symptom severity modulator</fullName>
    </alternativeName>
</protein>
<accession>P50625</accession>
<gene>
    <name type="ORF">ORF4</name>
</gene>
<comment type="function">
    <text evidence="1">Viral suppressor of RNA silencing which binds specifically to silencing RNAs (siRNAs). Acts as a molecular caliper to specifically select siRNAs based on the length of the duplex region of the RNA (By similarity).</text>
</comment>
<comment type="subunit">
    <text evidence="1">Homodimer.</text>
</comment>
<comment type="similarity">
    <text evidence="3">Belongs to the tombusvirus protein p19 family.</text>
</comment>
<proteinExistence type="inferred from homology"/>
<sequence>MERAIQGNDAREQAYGERWNGGPGGSTSPFQLPDESPSWTEWRLHNDETNSNQDNPLGFKESWGFGKVVFKRYLRYERTETSLHRVLGSWTGDSVNYAASRFLGFDQIGCTYSIRFRGVSVTISGGSRTLQHLSEMAIRSKQELLQLTPVKVESNVSRGRPEGVETFKEESE</sequence>